<protein>
    <recommendedName>
        <fullName>CRIB domain-containing protein RIC4</fullName>
    </recommendedName>
    <alternativeName>
        <fullName>ROP-interactive CRIB motif-containing protein 4</fullName>
    </alternativeName>
    <alternativeName>
        <fullName>Target of ROP protein RIC4</fullName>
    </alternativeName>
</protein>
<dbReference type="EMBL" id="AB005242">
    <property type="protein sequence ID" value="BAB09617.1"/>
    <property type="molecule type" value="Genomic_DNA"/>
</dbReference>
<dbReference type="EMBL" id="CP002688">
    <property type="protein sequence ID" value="AED92300.1"/>
    <property type="molecule type" value="Genomic_DNA"/>
</dbReference>
<dbReference type="EMBL" id="BT010523">
    <property type="protein sequence ID" value="AAQ65146.1"/>
    <property type="molecule type" value="mRNA"/>
</dbReference>
<dbReference type="EMBL" id="AK176878">
    <property type="protein sequence ID" value="BAD44641.1"/>
    <property type="molecule type" value="mRNA"/>
</dbReference>
<dbReference type="RefSeq" id="NP_197153.1">
    <property type="nucleotide sequence ID" value="NM_121654.3"/>
</dbReference>
<dbReference type="BioGRID" id="16786">
    <property type="interactions" value="2"/>
</dbReference>
<dbReference type="FunCoup" id="Q9FFD5">
    <property type="interactions" value="150"/>
</dbReference>
<dbReference type="IntAct" id="Q9FFD5">
    <property type="interactions" value="1"/>
</dbReference>
<dbReference type="STRING" id="3702.Q9FFD5"/>
<dbReference type="PaxDb" id="3702-AT5G16490.1"/>
<dbReference type="EnsemblPlants" id="AT5G16490.1">
    <property type="protein sequence ID" value="AT5G16490.1"/>
    <property type="gene ID" value="AT5G16490"/>
</dbReference>
<dbReference type="GeneID" id="831510"/>
<dbReference type="Gramene" id="AT5G16490.1">
    <property type="protein sequence ID" value="AT5G16490.1"/>
    <property type="gene ID" value="AT5G16490"/>
</dbReference>
<dbReference type="KEGG" id="ath:AT5G16490"/>
<dbReference type="Araport" id="AT5G16490"/>
<dbReference type="TAIR" id="AT5G16490">
    <property type="gene designation" value="RIC4"/>
</dbReference>
<dbReference type="eggNOG" id="ENOG502S24M">
    <property type="taxonomic scope" value="Eukaryota"/>
</dbReference>
<dbReference type="HOGENOM" id="CLU_114322_1_0_1"/>
<dbReference type="InParanoid" id="Q9FFD5"/>
<dbReference type="OMA" id="DPIRGWD"/>
<dbReference type="PhylomeDB" id="Q9FFD5"/>
<dbReference type="PRO" id="PR:Q9FFD5"/>
<dbReference type="Proteomes" id="UP000006548">
    <property type="component" value="Chromosome 5"/>
</dbReference>
<dbReference type="ExpressionAtlas" id="Q9FFD5">
    <property type="expression patterns" value="baseline and differential"/>
</dbReference>
<dbReference type="GO" id="GO:0016324">
    <property type="term" value="C:apical plasma membrane"/>
    <property type="evidence" value="ECO:0000314"/>
    <property type="project" value="TAIR"/>
</dbReference>
<dbReference type="GO" id="GO:0005886">
    <property type="term" value="C:plasma membrane"/>
    <property type="evidence" value="ECO:0000314"/>
    <property type="project" value="TAIR"/>
</dbReference>
<dbReference type="GO" id="GO:0010215">
    <property type="term" value="P:cellulose microfibril organization"/>
    <property type="evidence" value="ECO:0000315"/>
    <property type="project" value="TAIR"/>
</dbReference>
<dbReference type="GO" id="GO:0051650">
    <property type="term" value="P:establishment of vesicle localization"/>
    <property type="evidence" value="ECO:0000314"/>
    <property type="project" value="TAIR"/>
</dbReference>
<dbReference type="GO" id="GO:0009860">
    <property type="term" value="P:pollen tube growth"/>
    <property type="evidence" value="ECO:0000315"/>
    <property type="project" value="TAIR"/>
</dbReference>
<dbReference type="GO" id="GO:0030833">
    <property type="term" value="P:regulation of actin filament polymerization"/>
    <property type="evidence" value="ECO:0000315"/>
    <property type="project" value="TAIR"/>
</dbReference>
<dbReference type="GO" id="GO:0017157">
    <property type="term" value="P:regulation of exocytosis"/>
    <property type="evidence" value="ECO:0000314"/>
    <property type="project" value="TAIR"/>
</dbReference>
<dbReference type="CDD" id="cd00132">
    <property type="entry name" value="CRIB"/>
    <property type="match status" value="1"/>
</dbReference>
<dbReference type="Gene3D" id="3.90.810.10">
    <property type="entry name" value="CRIB domain"/>
    <property type="match status" value="1"/>
</dbReference>
<dbReference type="InterPro" id="IPR000095">
    <property type="entry name" value="CRIB_dom"/>
</dbReference>
<dbReference type="InterPro" id="IPR036936">
    <property type="entry name" value="CRIB_dom_sf"/>
</dbReference>
<dbReference type="InterPro" id="IPR044509">
    <property type="entry name" value="RIC2/4"/>
</dbReference>
<dbReference type="PANTHER" id="PTHR46931">
    <property type="entry name" value="CRIB DOMAIN-CONTAINING PROTEIN RIC2"/>
    <property type="match status" value="1"/>
</dbReference>
<dbReference type="PANTHER" id="PTHR46931:SF6">
    <property type="entry name" value="CRIB DOMAIN-CONTAINING PROTEIN RIC4"/>
    <property type="match status" value="1"/>
</dbReference>
<dbReference type="Pfam" id="PF00786">
    <property type="entry name" value="PBD"/>
    <property type="match status" value="1"/>
</dbReference>
<dbReference type="PROSITE" id="PS50108">
    <property type="entry name" value="CRIB"/>
    <property type="match status" value="1"/>
</dbReference>
<keyword id="KW-1003">Cell membrane</keyword>
<keyword id="KW-0217">Developmental protein</keyword>
<keyword id="KW-0341">Growth regulation</keyword>
<keyword id="KW-0472">Membrane</keyword>
<keyword id="KW-1185">Reference proteome</keyword>
<accession>Q9FFD5</accession>
<evidence type="ECO:0000255" key="1">
    <source>
        <dbReference type="PROSITE-ProRule" id="PRU00057"/>
    </source>
</evidence>
<evidence type="ECO:0000269" key="2">
    <source>
    </source>
</evidence>
<evidence type="ECO:0000269" key="3">
    <source>
    </source>
</evidence>
<evidence type="ECO:0000269" key="4">
    <source>
    </source>
</evidence>
<evidence type="ECO:0000269" key="5">
    <source>
    </source>
</evidence>
<evidence type="ECO:0000269" key="6">
    <source>
    </source>
</evidence>
<evidence type="ECO:0000305" key="7">
    <source>
    </source>
</evidence>
<evidence type="ECO:0000305" key="8">
    <source>
    </source>
</evidence>
<evidence type="ECO:0000305" key="9">
    <source>
    </source>
</evidence>
<evidence type="ECO:0000305" key="10">
    <source>
    </source>
</evidence>
<reference key="1">
    <citation type="journal article" date="1997" name="DNA Res.">
        <title>Structural analysis of Arabidopsis thaliana chromosome 5. I. Sequence features of the 1.6 Mb regions covered by twenty physically assigned P1 clones.</title>
        <authorList>
            <person name="Sato S."/>
            <person name="Kotani H."/>
            <person name="Nakamura Y."/>
            <person name="Kaneko T."/>
            <person name="Asamizu E."/>
            <person name="Fukami M."/>
            <person name="Miyajima N."/>
            <person name="Tabata S."/>
        </authorList>
    </citation>
    <scope>NUCLEOTIDE SEQUENCE [LARGE SCALE GENOMIC DNA]</scope>
    <source>
        <strain>cv. Columbia</strain>
    </source>
</reference>
<reference key="2">
    <citation type="journal article" date="2017" name="Plant J.">
        <title>Araport11: a complete reannotation of the Arabidopsis thaliana reference genome.</title>
        <authorList>
            <person name="Cheng C.Y."/>
            <person name="Krishnakumar V."/>
            <person name="Chan A.P."/>
            <person name="Thibaud-Nissen F."/>
            <person name="Schobel S."/>
            <person name="Town C.D."/>
        </authorList>
    </citation>
    <scope>GENOME REANNOTATION</scope>
    <source>
        <strain>cv. Columbia</strain>
    </source>
</reference>
<reference key="3">
    <citation type="journal article" date="2003" name="Science">
        <title>Empirical analysis of transcriptional activity in the Arabidopsis genome.</title>
        <authorList>
            <person name="Yamada K."/>
            <person name="Lim J."/>
            <person name="Dale J.M."/>
            <person name="Chen H."/>
            <person name="Shinn P."/>
            <person name="Palm C.J."/>
            <person name="Southwick A.M."/>
            <person name="Wu H.C."/>
            <person name="Kim C.J."/>
            <person name="Nguyen M."/>
            <person name="Pham P.K."/>
            <person name="Cheuk R.F."/>
            <person name="Karlin-Newmann G."/>
            <person name="Liu S.X."/>
            <person name="Lam B."/>
            <person name="Sakano H."/>
            <person name="Wu T."/>
            <person name="Yu G."/>
            <person name="Miranda M."/>
            <person name="Quach H.L."/>
            <person name="Tripp M."/>
            <person name="Chang C.H."/>
            <person name="Lee J.M."/>
            <person name="Toriumi M.J."/>
            <person name="Chan M.M."/>
            <person name="Tang C.C."/>
            <person name="Onodera C.S."/>
            <person name="Deng J.M."/>
            <person name="Akiyama K."/>
            <person name="Ansari Y."/>
            <person name="Arakawa T."/>
            <person name="Banh J."/>
            <person name="Banno F."/>
            <person name="Bowser L."/>
            <person name="Brooks S.Y."/>
            <person name="Carninci P."/>
            <person name="Chao Q."/>
            <person name="Choy N."/>
            <person name="Enju A."/>
            <person name="Goldsmith A.D."/>
            <person name="Gurjal M."/>
            <person name="Hansen N.F."/>
            <person name="Hayashizaki Y."/>
            <person name="Johnson-Hopson C."/>
            <person name="Hsuan V.W."/>
            <person name="Iida K."/>
            <person name="Karnes M."/>
            <person name="Khan S."/>
            <person name="Koesema E."/>
            <person name="Ishida J."/>
            <person name="Jiang P.X."/>
            <person name="Jones T."/>
            <person name="Kawai J."/>
            <person name="Kamiya A."/>
            <person name="Meyers C."/>
            <person name="Nakajima M."/>
            <person name="Narusaka M."/>
            <person name="Seki M."/>
            <person name="Sakurai T."/>
            <person name="Satou M."/>
            <person name="Tamse R."/>
            <person name="Vaysberg M."/>
            <person name="Wallender E.K."/>
            <person name="Wong C."/>
            <person name="Yamamura Y."/>
            <person name="Yuan S."/>
            <person name="Shinozaki K."/>
            <person name="Davis R.W."/>
            <person name="Theologis A."/>
            <person name="Ecker J.R."/>
        </authorList>
    </citation>
    <scope>NUCLEOTIDE SEQUENCE [LARGE SCALE MRNA]</scope>
    <source>
        <strain>cv. Columbia</strain>
    </source>
</reference>
<reference key="4">
    <citation type="submission" date="2004-09" db="EMBL/GenBank/DDBJ databases">
        <title>Large-scale analysis of RIKEN Arabidopsis full-length (RAFL) cDNAs.</title>
        <authorList>
            <person name="Totoki Y."/>
            <person name="Seki M."/>
            <person name="Ishida J."/>
            <person name="Nakajima M."/>
            <person name="Enju A."/>
            <person name="Kamiya A."/>
            <person name="Narusaka M."/>
            <person name="Shin-i T."/>
            <person name="Nakagawa M."/>
            <person name="Sakamoto N."/>
            <person name="Oishi K."/>
            <person name="Kohara Y."/>
            <person name="Kobayashi M."/>
            <person name="Toyoda A."/>
            <person name="Sakaki Y."/>
            <person name="Sakurai T."/>
            <person name="Iida K."/>
            <person name="Akiyama K."/>
            <person name="Satou M."/>
            <person name="Toyoda T."/>
            <person name="Konagaya A."/>
            <person name="Carninci P."/>
            <person name="Kawai J."/>
            <person name="Hayashizaki Y."/>
            <person name="Shinozaki K."/>
        </authorList>
    </citation>
    <scope>NUCLEOTIDE SEQUENCE [LARGE SCALE MRNA]</scope>
    <source>
        <strain>cv. Columbia</strain>
    </source>
</reference>
<reference key="5">
    <citation type="journal article" date="2001" name="Plant Cell">
        <title>A genome-wide analysis of Arabidopsis Rop-interactive CRIB motif-containing proteins that act as Rop GTPase targets.</title>
        <authorList>
            <person name="Wu G."/>
            <person name="Gu Y."/>
            <person name="Li S."/>
            <person name="Yang Z."/>
        </authorList>
    </citation>
    <scope>FUNCTION</scope>
    <scope>INTERACTION WITH ARAC11/ROP1</scope>
    <scope>SUBCELLULAR LOCATION</scope>
    <scope>TISSUE SPECIFICITY</scope>
    <scope>GENE FAMILY</scope>
    <scope>NOMENCLATURE</scope>
</reference>
<reference key="6">
    <citation type="journal article" date="2005" name="Cell">
        <title>Arabidopsis interdigitating cell growth requires two antagonistic pathways with opposing action on cell morphogenesis.</title>
        <authorList>
            <person name="Fu Y."/>
            <person name="Gu Y."/>
            <person name="Zheng Z."/>
            <person name="Wasteneys G."/>
            <person name="Yang Z."/>
        </authorList>
    </citation>
    <scope>FUNCTION</scope>
    <scope>INTERACTION WITH ARAC4/ROP2</scope>
    <scope>SUBCELLULAR LOCATION</scope>
</reference>
<reference key="7">
    <citation type="journal article" date="2005" name="J. Cell Biol.">
        <title>A Rho family GTPase controls actin dynamics and tip growth via two counteracting downstream pathways in pollen tubes.</title>
        <authorList>
            <person name="Gu Y."/>
            <person name="Fu Y."/>
            <person name="Dowd P."/>
            <person name="Li S."/>
            <person name="Vernoud V."/>
            <person name="Gilroy S."/>
            <person name="Yang Z."/>
        </authorList>
    </citation>
    <scope>FUNCTION</scope>
    <scope>INTERACTION WITH ARAC11/ROP1</scope>
    <scope>SUBCELLULAR LOCATION</scope>
    <scope>MUTAGENESIS OF HIS-107 AND HIS-110</scope>
</reference>
<reference key="8">
    <citation type="journal article" date="2008" name="J. Cell Biol.">
        <title>Rho-GTPase-dependent filamentous actin dynamics coordinate vesicle targeting and exocytosis during tip growth.</title>
        <authorList>
            <person name="Lee Y.J."/>
            <person name="Szumlanski A."/>
            <person name="Nielsen E."/>
            <person name="Yang Z."/>
        </authorList>
    </citation>
    <scope>FUNCTION</scope>
</reference>
<reference key="9">
    <citation type="journal article" date="2010" name="PLoS ONE">
        <title>An integrative approach to the identification of Arabidopsis and rice genes involved in xylan and secondary wall development.</title>
        <authorList>
            <person name="Oikawa A."/>
            <person name="Joshi H.J."/>
            <person name="Rennie E.A."/>
            <person name="Ebert B."/>
            <person name="Manisseri C."/>
            <person name="Heazlewood J.L."/>
            <person name="Scheller H.V."/>
        </authorList>
    </citation>
    <scope>SUBCELLULAR LOCATION</scope>
</reference>
<reference key="10">
    <citation type="journal article" date="2013" name="Mol. Plant">
        <title>Arabidopsis ROP1 and ROP6 influence germination time, root morphology, the formation of F-actin bundles, and symbiotic fungal interactions.</title>
        <authorList>
            <person name="Venus Y."/>
            <person name="Oelmueller R."/>
        </authorList>
    </citation>
    <scope>FUNCTION</scope>
    <scope>INDUCTION</scope>
    <scope>DISRUPTION PHENOTYPE</scope>
</reference>
<feature type="chain" id="PRO_0000422727" description="CRIB domain-containing protein RIC4">
    <location>
        <begin position="1"/>
        <end position="153"/>
    </location>
</feature>
<feature type="domain" description="CRIB" evidence="1">
    <location>
        <begin position="99"/>
        <end position="112"/>
    </location>
</feature>
<feature type="mutagenesis site" description="Loss of interaction with ARAC11/ROP1; when associated with D110." evidence="4">
    <original>H</original>
    <variation>D</variation>
    <location>
        <position position="107"/>
    </location>
</feature>
<feature type="mutagenesis site" description="Loss of interaction with ARAC11/ROP1; when associated with D107." evidence="4">
    <original>H</original>
    <variation>D</variation>
    <location>
        <position position="110"/>
    </location>
</feature>
<proteinExistence type="evidence at protein level"/>
<gene>
    <name type="primary">RIC4</name>
    <name type="ordered locus">At5g16490</name>
    <name type="ORF">MQK4.23</name>
</gene>
<comment type="function">
    <text evidence="2 3 4 5 6">Functions as a downstream effector of Rho-related GTP binding proteins of the 'Rho of Plants' (ROPs) family. Participates in the propagation of ROP GTPase signals in specific cellular responses. Required for actin cortical microfilament assembly. Activated by ARAC4/ROP2 to promote the assembly of cortical actin microfilaments required for lobe formation and lateral expansion of pavement cells. Interaction with, and activation by ARAC4/ROP2 is inhibited by RIC1. Functions as a downstream effector of ARAC11/ROP1 to promote the assembly of apical F-actin associated with vesicle accumulation in the tip of the growing pollen tube. Counteracts the ARAC11/ROP1-RIC3 pathway, which activates calcium signaling that leads to apical F-actin disassembly associated with exocytosis, to control actin dynamics and pollen tube apical growth. Downstream of ARAC11/ROP1, is involved in the growth responses to the root-colonizing endophytic fungus P.indica.</text>
</comment>
<comment type="subunit">
    <text evidence="2 3 4">Interacts with ARAC4/ROP2 and ARAC11/ROP1.</text>
</comment>
<comment type="subcellular location">
    <subcellularLocation>
        <location evidence="7 8 9 10">Cell membrane</location>
        <topology evidence="7 8 9 10">Peripheral membrane protein</topology>
    </subcellularLocation>
</comment>
<comment type="tissue specificity">
    <text evidence="2">Expressed in roots, leaves, stems, flowers, siliques and pollen.</text>
</comment>
<comment type="induction">
    <text evidence="6">By the root-colonizing endophytic fungus P.indica.</text>
</comment>
<comment type="disruption phenotype">
    <text evidence="6">Increased rate of seed germination.</text>
</comment>
<comment type="miscellaneous">
    <text evidence="7">Over-expression of RIC4 in tobacco germinating pollen induces depolarized pollen tube growth.</text>
</comment>
<organism>
    <name type="scientific">Arabidopsis thaliana</name>
    <name type="common">Mouse-ear cress</name>
    <dbReference type="NCBI Taxonomy" id="3702"/>
    <lineage>
        <taxon>Eukaryota</taxon>
        <taxon>Viridiplantae</taxon>
        <taxon>Streptophyta</taxon>
        <taxon>Embryophyta</taxon>
        <taxon>Tracheophyta</taxon>
        <taxon>Spermatophyta</taxon>
        <taxon>Magnoliopsida</taxon>
        <taxon>eudicotyledons</taxon>
        <taxon>Gunneridae</taxon>
        <taxon>Pentapetalae</taxon>
        <taxon>rosids</taxon>
        <taxon>malvids</taxon>
        <taxon>Brassicales</taxon>
        <taxon>Brassicaceae</taxon>
        <taxon>Camelineae</taxon>
        <taxon>Arabidopsis</taxon>
    </lineage>
</organism>
<sequence length="153" mass="17013">MRDRMERLVVLPFSIGCISVSSVAVLSPLSKPHHHHSRQVIREQEEEDNMKNVFKFLAVSKPEISIGINRIFKSFKTISQLFADKDEEKEEVETSGMEIGVPTNVKHVSHIGWESGLTAATGPGKGWEDLIPPELLAAAASKKEINPHLHPTL</sequence>
<name>RIC4_ARATH</name>